<accession>Q88RP7</accession>
<comment type="function">
    <text evidence="1">The alpha subunit is responsible for the aldol cleavage of indoleglycerol phosphate to indole and glyceraldehyde 3-phosphate.</text>
</comment>
<comment type="catalytic activity">
    <reaction evidence="1">
        <text>(1S,2R)-1-C-(indol-3-yl)glycerol 3-phosphate + L-serine = D-glyceraldehyde 3-phosphate + L-tryptophan + H2O</text>
        <dbReference type="Rhea" id="RHEA:10532"/>
        <dbReference type="ChEBI" id="CHEBI:15377"/>
        <dbReference type="ChEBI" id="CHEBI:33384"/>
        <dbReference type="ChEBI" id="CHEBI:57912"/>
        <dbReference type="ChEBI" id="CHEBI:58866"/>
        <dbReference type="ChEBI" id="CHEBI:59776"/>
        <dbReference type="EC" id="4.2.1.20"/>
    </reaction>
</comment>
<comment type="pathway">
    <text evidence="1">Amino-acid biosynthesis; L-tryptophan biosynthesis; L-tryptophan from chorismate: step 5/5.</text>
</comment>
<comment type="subunit">
    <text evidence="1">Tetramer of two alpha and two beta chains.</text>
</comment>
<comment type="similarity">
    <text evidence="1">Belongs to the TrpA family.</text>
</comment>
<dbReference type="EC" id="4.2.1.20" evidence="1"/>
<dbReference type="EMBL" id="AE015451">
    <property type="protein sequence ID" value="AAN65716.1"/>
    <property type="molecule type" value="Genomic_DNA"/>
</dbReference>
<dbReference type="RefSeq" id="NP_742252.1">
    <property type="nucleotide sequence ID" value="NC_002947.4"/>
</dbReference>
<dbReference type="RefSeq" id="WP_010951488.1">
    <property type="nucleotide sequence ID" value="NZ_CP169744.1"/>
</dbReference>
<dbReference type="SMR" id="Q88RP7"/>
<dbReference type="STRING" id="160488.PP_0082"/>
<dbReference type="PaxDb" id="160488-PP_0082"/>
<dbReference type="GeneID" id="83677328"/>
<dbReference type="KEGG" id="ppu:PP_0082"/>
<dbReference type="PATRIC" id="fig|160488.4.peg.85"/>
<dbReference type="eggNOG" id="COG0159">
    <property type="taxonomic scope" value="Bacteria"/>
</dbReference>
<dbReference type="HOGENOM" id="CLU_016734_0_4_6"/>
<dbReference type="OrthoDB" id="9804578at2"/>
<dbReference type="PhylomeDB" id="Q88RP7"/>
<dbReference type="BioCyc" id="PPUT160488:G1G01-86-MONOMER"/>
<dbReference type="UniPathway" id="UPA00035">
    <property type="reaction ID" value="UER00044"/>
</dbReference>
<dbReference type="Proteomes" id="UP000000556">
    <property type="component" value="Chromosome"/>
</dbReference>
<dbReference type="GO" id="GO:0005829">
    <property type="term" value="C:cytosol"/>
    <property type="evidence" value="ECO:0007669"/>
    <property type="project" value="TreeGrafter"/>
</dbReference>
<dbReference type="GO" id="GO:0004834">
    <property type="term" value="F:tryptophan synthase activity"/>
    <property type="evidence" value="ECO:0007669"/>
    <property type="project" value="UniProtKB-UniRule"/>
</dbReference>
<dbReference type="CDD" id="cd04724">
    <property type="entry name" value="Tryptophan_synthase_alpha"/>
    <property type="match status" value="1"/>
</dbReference>
<dbReference type="FunFam" id="3.20.20.70:FF:000037">
    <property type="entry name" value="Tryptophan synthase alpha chain"/>
    <property type="match status" value="1"/>
</dbReference>
<dbReference type="Gene3D" id="3.20.20.70">
    <property type="entry name" value="Aldolase class I"/>
    <property type="match status" value="1"/>
</dbReference>
<dbReference type="HAMAP" id="MF_00131">
    <property type="entry name" value="Trp_synth_alpha"/>
    <property type="match status" value="1"/>
</dbReference>
<dbReference type="InterPro" id="IPR013785">
    <property type="entry name" value="Aldolase_TIM"/>
</dbReference>
<dbReference type="InterPro" id="IPR011060">
    <property type="entry name" value="RibuloseP-bd_barrel"/>
</dbReference>
<dbReference type="InterPro" id="IPR018204">
    <property type="entry name" value="Trp_synthase_alpha_AS"/>
</dbReference>
<dbReference type="InterPro" id="IPR002028">
    <property type="entry name" value="Trp_synthase_suA"/>
</dbReference>
<dbReference type="NCBIfam" id="TIGR00262">
    <property type="entry name" value="trpA"/>
    <property type="match status" value="1"/>
</dbReference>
<dbReference type="PANTHER" id="PTHR43406:SF1">
    <property type="entry name" value="TRYPTOPHAN SYNTHASE ALPHA CHAIN, CHLOROPLASTIC"/>
    <property type="match status" value="1"/>
</dbReference>
<dbReference type="PANTHER" id="PTHR43406">
    <property type="entry name" value="TRYPTOPHAN SYNTHASE, ALPHA CHAIN"/>
    <property type="match status" value="1"/>
</dbReference>
<dbReference type="Pfam" id="PF00290">
    <property type="entry name" value="Trp_syntA"/>
    <property type="match status" value="1"/>
</dbReference>
<dbReference type="SUPFAM" id="SSF51366">
    <property type="entry name" value="Ribulose-phoshate binding barrel"/>
    <property type="match status" value="1"/>
</dbReference>
<dbReference type="PROSITE" id="PS00167">
    <property type="entry name" value="TRP_SYNTHASE_ALPHA"/>
    <property type="match status" value="1"/>
</dbReference>
<organism>
    <name type="scientific">Pseudomonas putida (strain ATCC 47054 / DSM 6125 / CFBP 8728 / NCIMB 11950 / KT2440)</name>
    <dbReference type="NCBI Taxonomy" id="160488"/>
    <lineage>
        <taxon>Bacteria</taxon>
        <taxon>Pseudomonadati</taxon>
        <taxon>Pseudomonadota</taxon>
        <taxon>Gammaproteobacteria</taxon>
        <taxon>Pseudomonadales</taxon>
        <taxon>Pseudomonadaceae</taxon>
        <taxon>Pseudomonas</taxon>
    </lineage>
</organism>
<feature type="chain" id="PRO_0000098827" description="Tryptophan synthase alpha chain">
    <location>
        <begin position="1"/>
        <end position="269"/>
    </location>
</feature>
<feature type="active site" description="Proton acceptor" evidence="1">
    <location>
        <position position="49"/>
    </location>
</feature>
<feature type="active site" description="Proton acceptor" evidence="1">
    <location>
        <position position="60"/>
    </location>
</feature>
<evidence type="ECO:0000255" key="1">
    <source>
        <dbReference type="HAMAP-Rule" id="MF_00131"/>
    </source>
</evidence>
<gene>
    <name evidence="1" type="primary">trpA</name>
    <name type="ordered locus">PP_0082</name>
</gene>
<proteinExistence type="inferred from homology"/>
<name>TRPA_PSEPK</name>
<sequence>MSRLEQRFAELKAEGRSALVTFVTAGDPGYDASLQILKGLPAAGADVIELGMPFTDPMADGVAIQLATLRALEAGQTLVKTLQMVREFRVDNQTTPIVLMGYYNPIHRFGVDTFVTQAKEAGVDGLIIVDLPPEHDAELATPAQAAGIDFIRLTTPTTDDARLPRVLERSSGFVYYVSVAGVTGAGSATTEHVTEAIARLRRHTDLPISVGFGIRTPEQAANIARLADGVVVGSALVDKIAQAKSADQAVTDVLSLCSALAEGVRGARR</sequence>
<protein>
    <recommendedName>
        <fullName evidence="1">Tryptophan synthase alpha chain</fullName>
        <ecNumber evidence="1">4.2.1.20</ecNumber>
    </recommendedName>
</protein>
<reference key="1">
    <citation type="journal article" date="2002" name="Environ. Microbiol.">
        <title>Complete genome sequence and comparative analysis of the metabolically versatile Pseudomonas putida KT2440.</title>
        <authorList>
            <person name="Nelson K.E."/>
            <person name="Weinel C."/>
            <person name="Paulsen I.T."/>
            <person name="Dodson R.J."/>
            <person name="Hilbert H."/>
            <person name="Martins dos Santos V.A.P."/>
            <person name="Fouts D.E."/>
            <person name="Gill S.R."/>
            <person name="Pop M."/>
            <person name="Holmes M."/>
            <person name="Brinkac L.M."/>
            <person name="Beanan M.J."/>
            <person name="DeBoy R.T."/>
            <person name="Daugherty S.C."/>
            <person name="Kolonay J.F."/>
            <person name="Madupu R."/>
            <person name="Nelson W.C."/>
            <person name="White O."/>
            <person name="Peterson J.D."/>
            <person name="Khouri H.M."/>
            <person name="Hance I."/>
            <person name="Chris Lee P."/>
            <person name="Holtzapple E.K."/>
            <person name="Scanlan D."/>
            <person name="Tran K."/>
            <person name="Moazzez A."/>
            <person name="Utterback T.R."/>
            <person name="Rizzo M."/>
            <person name="Lee K."/>
            <person name="Kosack D."/>
            <person name="Moestl D."/>
            <person name="Wedler H."/>
            <person name="Lauber J."/>
            <person name="Stjepandic D."/>
            <person name="Hoheisel J."/>
            <person name="Straetz M."/>
            <person name="Heim S."/>
            <person name="Kiewitz C."/>
            <person name="Eisen J.A."/>
            <person name="Timmis K.N."/>
            <person name="Duesterhoeft A."/>
            <person name="Tuemmler B."/>
            <person name="Fraser C.M."/>
        </authorList>
    </citation>
    <scope>NUCLEOTIDE SEQUENCE [LARGE SCALE GENOMIC DNA]</scope>
    <source>
        <strain>ATCC 47054 / DSM 6125 / CFBP 8728 / NCIMB 11950 / KT2440</strain>
    </source>
</reference>
<keyword id="KW-0028">Amino-acid biosynthesis</keyword>
<keyword id="KW-0057">Aromatic amino acid biosynthesis</keyword>
<keyword id="KW-0456">Lyase</keyword>
<keyword id="KW-1185">Reference proteome</keyword>
<keyword id="KW-0822">Tryptophan biosynthesis</keyword>